<sequence>MSPEVTLNRISPALSPFISSVVRNGKVGLDSTNCLRITDLKSGCTSLTPGPSCDRFKLHIPYAGETLKWDIIFNASYPELPPDFIFGEDAEFLPDPSALHNLSEWNPSDPECLLLVVKELVQQYHQYQCSRLSESSRLMFEYQTLQEEPQYGLNMEIYAGKKNNWTGEFSARFLLKMPVDFSNIPIYLLKDSNEDPGEDVALLSVSFEDAEATQVFPKLFLSPRIEHALGGSSALHIPVFPSGSCLIDYVPQVCQLLTNKVQYVIQGYHKRREYIAAFLSHFGTGVVEYDAEGFTKLTLLLSWKDFCFLVHTVDLPLYFPRDQPTLTFQSVYHFTNSGQLYSQAQKNYPYSPRWDGNEMAKRAKAYFRSFVPQFQEAAFANGKL</sequence>
<comment type="function">
    <text evidence="1">Component of the BRCA1-A complex, a complex that specifically recognizes 'Lys-63'-linked ubiquitinated histones H2A and H2AX at DNA lesions sites, leading to target the brca1-bard1 heterodimer to sites of DNA damage at double-strand breaks (DSBs). The BRCA1-A complex also possesses deubiquitinase activity that specifically removes 'Lys-63'-linked ubiquitin on histones H2A and H2AX. In the BRCA1-A complex, it acts as an adapter that bridges the interaction between babam1/nba1 and the rest of the complex, thereby being required for the complex integrity and modulating the E3 ubiquitin ligase activity of the brca1-bard1 heterodimer. Component of the BRISC complex, a multiprotein complex that specifically cleaves 'Lys-63'-linked ubiquitin in various substrates. Within the BRISC complex, acts as an adapter that bridges the interaction between babam1/nba1 and the rest of the complex, thereby being required for the complex integrity. The BRISC complex is required for normal mitotic spindle assembly and microtubule attachment to kinetochores via its role in deubiquitinating numa1. The BRISC complex plays a role in interferon signaling via its role in the deubiquitination of the interferon receptor ifnar1; deubiquitination increases ifnar1 activity by enhancing its stability and cell surface expression. Down-regulates the response to bacterial lipopolysaccharide (LPS) via its role in ifnar1 deubiquitination. May play a role in homeostasis or cellular differentiation in cells of neural, epithelial and germline origins. May also act as a death receptor-associated anti-apoptotic protein, which inhibits the mitochondrial apoptotic pathway.</text>
</comment>
<comment type="subunit">
    <text evidence="1">Component of the ARISC complex, at least composed of uimc1/rap80, abraxas1, brcc3/brcc36, babam2 and babam1/nba1. Component of the BRCA1-A complex, at least composed of brca1, bard1, uimc1/rap80, abraxas1, brcc3/brcc36, babam2 and babam1/nba1. In the BRCA1-A complex, interacts directly with abraxas1, brcc3/brcc36 and babam1/nba1. Binds polyubiquitin. Component of the BRISC complex, at least composed of abraxas2, brcc3/brcc36, babam2 and babam1/nba1.</text>
</comment>
<comment type="subcellular location">
    <subcellularLocation>
        <location evidence="1">Cytoplasm</location>
    </subcellularLocation>
    <subcellularLocation>
        <location evidence="1">Nucleus</location>
    </subcellularLocation>
    <text evidence="1">Localizes at sites of DNA damage at double-strand breaks (DSBs).</text>
</comment>
<comment type="domain">
    <text evidence="1">Contains 2 ubiquitin-conjugating enzyme family-like (UEV-like) regions. These regions lack the critical Cys residues required for ubiquitination but retain the ability to bind ubiquitin.</text>
</comment>
<comment type="similarity">
    <text evidence="2">Belongs to the BABAM2 family.</text>
</comment>
<reference key="1">
    <citation type="submission" date="2004-06" db="EMBL/GenBank/DDBJ databases">
        <authorList>
            <consortium name="NIH - Xenopus Gene Collection (XGC) project"/>
        </authorList>
    </citation>
    <scope>NUCLEOTIDE SEQUENCE [LARGE SCALE MRNA]</scope>
    <source>
        <tissue>Oocyte</tissue>
    </source>
</reference>
<gene>
    <name type="primary">babam2</name>
    <name type="synonym">bre</name>
</gene>
<evidence type="ECO:0000250" key="1">
    <source>
        <dbReference type="UniProtKB" id="Q9NXR7"/>
    </source>
</evidence>
<evidence type="ECO:0000255" key="2"/>
<accession>Q6GPL9</accession>
<dbReference type="EMBL" id="BC073095">
    <property type="protein sequence ID" value="AAH73095.1"/>
    <property type="molecule type" value="mRNA"/>
</dbReference>
<dbReference type="RefSeq" id="NP_001085651.1">
    <property type="nucleotide sequence ID" value="NM_001092182.1"/>
</dbReference>
<dbReference type="SMR" id="Q6GPL9"/>
<dbReference type="DNASU" id="444077"/>
<dbReference type="GeneID" id="444077"/>
<dbReference type="KEGG" id="xla:444077"/>
<dbReference type="AGR" id="Xenbase:XB-GENE-1032926"/>
<dbReference type="CTD" id="444077"/>
<dbReference type="Xenbase" id="XB-GENE-1032926">
    <property type="gene designation" value="babam2.L"/>
</dbReference>
<dbReference type="OrthoDB" id="538811at2759"/>
<dbReference type="Proteomes" id="UP000186698">
    <property type="component" value="Chromosome 5L"/>
</dbReference>
<dbReference type="Bgee" id="444077">
    <property type="expression patterns" value="Expressed in egg cell and 19 other cell types or tissues"/>
</dbReference>
<dbReference type="GO" id="GO:0070531">
    <property type="term" value="C:BRCA1-A complex"/>
    <property type="evidence" value="ECO:0000250"/>
    <property type="project" value="UniProtKB"/>
</dbReference>
<dbReference type="GO" id="GO:0070552">
    <property type="term" value="C:BRISC complex"/>
    <property type="evidence" value="ECO:0000250"/>
    <property type="project" value="UniProtKB"/>
</dbReference>
<dbReference type="GO" id="GO:0005737">
    <property type="term" value="C:cytoplasm"/>
    <property type="evidence" value="ECO:0000250"/>
    <property type="project" value="UniProtKB"/>
</dbReference>
<dbReference type="GO" id="GO:0005634">
    <property type="term" value="C:nucleus"/>
    <property type="evidence" value="ECO:0000250"/>
    <property type="project" value="UniProtKB"/>
</dbReference>
<dbReference type="GO" id="GO:0031593">
    <property type="term" value="F:polyubiquitin modification-dependent protein binding"/>
    <property type="evidence" value="ECO:0000250"/>
    <property type="project" value="UniProtKB"/>
</dbReference>
<dbReference type="GO" id="GO:0006915">
    <property type="term" value="P:apoptotic process"/>
    <property type="evidence" value="ECO:0007669"/>
    <property type="project" value="UniProtKB-KW"/>
</dbReference>
<dbReference type="GO" id="GO:0051301">
    <property type="term" value="P:cell division"/>
    <property type="evidence" value="ECO:0007669"/>
    <property type="project" value="UniProtKB-KW"/>
</dbReference>
<dbReference type="GO" id="GO:0006325">
    <property type="term" value="P:chromatin organization"/>
    <property type="evidence" value="ECO:0007669"/>
    <property type="project" value="UniProtKB-KW"/>
</dbReference>
<dbReference type="GO" id="GO:0006302">
    <property type="term" value="P:double-strand break repair"/>
    <property type="evidence" value="ECO:0000250"/>
    <property type="project" value="UniProtKB"/>
</dbReference>
<dbReference type="GO" id="GO:0007095">
    <property type="term" value="P:mitotic G2 DNA damage checkpoint signaling"/>
    <property type="evidence" value="ECO:0000250"/>
    <property type="project" value="UniProtKB"/>
</dbReference>
<dbReference type="GO" id="GO:0045739">
    <property type="term" value="P:positive regulation of DNA repair"/>
    <property type="evidence" value="ECO:0000250"/>
    <property type="project" value="UniProtKB"/>
</dbReference>
<dbReference type="GO" id="GO:0010212">
    <property type="term" value="P:response to ionizing radiation"/>
    <property type="evidence" value="ECO:0000250"/>
    <property type="project" value="UniProtKB"/>
</dbReference>
<dbReference type="CDD" id="cd23664">
    <property type="entry name" value="BRE"/>
    <property type="match status" value="1"/>
</dbReference>
<dbReference type="InterPro" id="IPR010358">
    <property type="entry name" value="BRE"/>
</dbReference>
<dbReference type="PANTHER" id="PTHR15189">
    <property type="entry name" value="BRISC AND BRCA1-A COMPLEX MEMBER 2"/>
    <property type="match status" value="1"/>
</dbReference>
<dbReference type="PANTHER" id="PTHR15189:SF7">
    <property type="entry name" value="BRISC AND BRCA1-A COMPLEX MEMBER 2"/>
    <property type="match status" value="1"/>
</dbReference>
<dbReference type="Pfam" id="PF06113">
    <property type="entry name" value="BRE"/>
    <property type="match status" value="1"/>
</dbReference>
<organism>
    <name type="scientific">Xenopus laevis</name>
    <name type="common">African clawed frog</name>
    <dbReference type="NCBI Taxonomy" id="8355"/>
    <lineage>
        <taxon>Eukaryota</taxon>
        <taxon>Metazoa</taxon>
        <taxon>Chordata</taxon>
        <taxon>Craniata</taxon>
        <taxon>Vertebrata</taxon>
        <taxon>Euteleostomi</taxon>
        <taxon>Amphibia</taxon>
        <taxon>Batrachia</taxon>
        <taxon>Anura</taxon>
        <taxon>Pipoidea</taxon>
        <taxon>Pipidae</taxon>
        <taxon>Xenopodinae</taxon>
        <taxon>Xenopus</taxon>
        <taxon>Xenopus</taxon>
    </lineage>
</organism>
<keyword id="KW-0053">Apoptosis</keyword>
<keyword id="KW-0131">Cell cycle</keyword>
<keyword id="KW-0132">Cell division</keyword>
<keyword id="KW-0156">Chromatin regulator</keyword>
<keyword id="KW-0963">Cytoplasm</keyword>
<keyword id="KW-0227">DNA damage</keyword>
<keyword id="KW-0234">DNA repair</keyword>
<keyword id="KW-0498">Mitosis</keyword>
<keyword id="KW-0539">Nucleus</keyword>
<keyword id="KW-1185">Reference proteome</keyword>
<keyword id="KW-0677">Repeat</keyword>
<keyword id="KW-0833">Ubl conjugation pathway</keyword>
<protein>
    <recommendedName>
        <fullName>BRISC and BRCA1-A complex member 2</fullName>
    </recommendedName>
    <alternativeName>
        <fullName>BRCA1-A complex subunit BRE</fullName>
    </alternativeName>
    <alternativeName>
        <fullName>BRCA1/BRCA2-containing complex subunit 45</fullName>
    </alternativeName>
    <alternativeName>
        <fullName>Brain and reproductive organ-expressed protein</fullName>
    </alternativeName>
</protein>
<proteinExistence type="evidence at transcript level"/>
<name>BABA2_XENLA</name>
<feature type="chain" id="PRO_0000373937" description="BRISC and BRCA1-A complex member 2">
    <location>
        <begin position="1"/>
        <end position="384"/>
    </location>
</feature>
<feature type="region of interest" description="UEV-like 1">
    <location>
        <begin position="30"/>
        <end position="147"/>
    </location>
</feature>
<feature type="region of interest" description="UEV-like 2">
    <location>
        <begin position="275"/>
        <end position="365"/>
    </location>
</feature>